<protein>
    <recommendedName>
        <fullName>Cytochrome b</fullName>
    </recommendedName>
    <alternativeName>
        <fullName>Complex III subunit 3</fullName>
    </alternativeName>
    <alternativeName>
        <fullName>Complex III subunit III</fullName>
    </alternativeName>
    <alternativeName>
        <fullName>Cytochrome b-c1 complex subunit 3</fullName>
    </alternativeName>
    <alternativeName>
        <fullName>Ubiquinol-cytochrome-c reductase complex cytochrome b subunit</fullName>
    </alternativeName>
</protein>
<sequence length="380" mass="42622">MAPNIRKSHPLLKMINNSLIDLPTPPNISAWWNFGSLLGICLMTQIITGLLLAAHYTADSTLAFTSVSHTCRNVQYGWLLRNLHANGASLFFICIYLHIGRGLYYGSYLYKETWNTGVILLLTLMATAFVGYVLPWGQMSFWGATVITNLFSAVPYIGQALVEWAWGGFSVDNPTLTRFFALHFLLPFLIASLTLVHLTFLHESGSNNPLGIPSDCDKIPFHPYFSIKDILGLALMLFPLMTLALFMPNLLGDPENFTPANPLVTPPHIKPEWYFLFAYAILRSIPNKLGGVLALAASVLILFLTPLLHKSKQRTMTFRPLSQLIFWILVANLLILTWVGSQPVEHPFIIIGQLASFTYFTTILILFPMISTLENKLLNY</sequence>
<reference key="1">
    <citation type="journal article" date="2000" name="Mol. Phylogenet. Evol.">
        <title>Higher-level phylogeny of trogoniformes.</title>
        <authorList>
            <person name="Espinosa de los Monteros A."/>
        </authorList>
    </citation>
    <scope>NUCLEOTIDE SEQUENCE [GENOMIC DNA]</scope>
</reference>
<reference key="2">
    <citation type="submission" date="1998-12" db="EMBL/GenBank/DDBJ databases">
        <title>Molecular phylogenetics of owls (Aves: Strigiformes) based on mitochondrial cytochrome-b sequences.</title>
        <authorList>
            <person name="Dunham S.M."/>
            <person name="Hoelzer G.A."/>
        </authorList>
    </citation>
    <scope>NUCLEOTIDE SEQUENCE [GENOMIC DNA] OF 45-137</scope>
</reference>
<proteinExistence type="inferred from homology"/>
<accession>Q9ZZE4</accession>
<accession>Q9T878</accession>
<evidence type="ECO:0000250" key="1"/>
<evidence type="ECO:0000250" key="2">
    <source>
        <dbReference type="UniProtKB" id="P00157"/>
    </source>
</evidence>
<evidence type="ECO:0000255" key="3">
    <source>
        <dbReference type="PROSITE-ProRule" id="PRU00967"/>
    </source>
</evidence>
<evidence type="ECO:0000255" key="4">
    <source>
        <dbReference type="PROSITE-ProRule" id="PRU00968"/>
    </source>
</evidence>
<evidence type="ECO:0000305" key="5"/>
<gene>
    <name type="primary">MT-CYB</name>
    <name type="synonym">COB</name>
    <name type="synonym">CYTB</name>
    <name type="synonym">MTCYB</name>
</gene>
<geneLocation type="mitochondrion"/>
<keyword id="KW-0249">Electron transport</keyword>
<keyword id="KW-0349">Heme</keyword>
<keyword id="KW-0408">Iron</keyword>
<keyword id="KW-0472">Membrane</keyword>
<keyword id="KW-0479">Metal-binding</keyword>
<keyword id="KW-0496">Mitochondrion</keyword>
<keyword id="KW-0999">Mitochondrion inner membrane</keyword>
<keyword id="KW-0679">Respiratory chain</keyword>
<keyword id="KW-0812">Transmembrane</keyword>
<keyword id="KW-1133">Transmembrane helix</keyword>
<keyword id="KW-0813">Transport</keyword>
<keyword id="KW-0830">Ubiquinone</keyword>
<dbReference type="EMBL" id="U89171">
    <property type="protein sequence ID" value="AAD00669.1"/>
    <property type="molecule type" value="Genomic_DNA"/>
</dbReference>
<dbReference type="EMBL" id="AF115870">
    <property type="protein sequence ID" value="AAF24628.1"/>
    <property type="molecule type" value="Genomic_DNA"/>
</dbReference>
<dbReference type="SMR" id="Q9ZZE4"/>
<dbReference type="GO" id="GO:0005743">
    <property type="term" value="C:mitochondrial inner membrane"/>
    <property type="evidence" value="ECO:0007669"/>
    <property type="project" value="UniProtKB-SubCell"/>
</dbReference>
<dbReference type="GO" id="GO:0045275">
    <property type="term" value="C:respiratory chain complex III"/>
    <property type="evidence" value="ECO:0007669"/>
    <property type="project" value="InterPro"/>
</dbReference>
<dbReference type="GO" id="GO:0046872">
    <property type="term" value="F:metal ion binding"/>
    <property type="evidence" value="ECO:0007669"/>
    <property type="project" value="UniProtKB-KW"/>
</dbReference>
<dbReference type="GO" id="GO:0008121">
    <property type="term" value="F:ubiquinol-cytochrome-c reductase activity"/>
    <property type="evidence" value="ECO:0007669"/>
    <property type="project" value="InterPro"/>
</dbReference>
<dbReference type="GO" id="GO:0006122">
    <property type="term" value="P:mitochondrial electron transport, ubiquinol to cytochrome c"/>
    <property type="evidence" value="ECO:0007669"/>
    <property type="project" value="TreeGrafter"/>
</dbReference>
<dbReference type="CDD" id="cd00290">
    <property type="entry name" value="cytochrome_b_C"/>
    <property type="match status" value="1"/>
</dbReference>
<dbReference type="CDD" id="cd00284">
    <property type="entry name" value="Cytochrome_b_N"/>
    <property type="match status" value="1"/>
</dbReference>
<dbReference type="FunFam" id="1.20.810.10:FF:000002">
    <property type="entry name" value="Cytochrome b"/>
    <property type="match status" value="1"/>
</dbReference>
<dbReference type="Gene3D" id="1.20.810.10">
    <property type="entry name" value="Cytochrome Bc1 Complex, Chain C"/>
    <property type="match status" value="1"/>
</dbReference>
<dbReference type="InterPro" id="IPR005798">
    <property type="entry name" value="Cyt_b/b6_C"/>
</dbReference>
<dbReference type="InterPro" id="IPR036150">
    <property type="entry name" value="Cyt_b/b6_C_sf"/>
</dbReference>
<dbReference type="InterPro" id="IPR005797">
    <property type="entry name" value="Cyt_b/b6_N"/>
</dbReference>
<dbReference type="InterPro" id="IPR027387">
    <property type="entry name" value="Cytb/b6-like_sf"/>
</dbReference>
<dbReference type="InterPro" id="IPR030689">
    <property type="entry name" value="Cytochrome_b"/>
</dbReference>
<dbReference type="InterPro" id="IPR048260">
    <property type="entry name" value="Cytochrome_b_C_euk/bac"/>
</dbReference>
<dbReference type="InterPro" id="IPR048259">
    <property type="entry name" value="Cytochrome_b_N_euk/bac"/>
</dbReference>
<dbReference type="InterPro" id="IPR016174">
    <property type="entry name" value="Di-haem_cyt_TM"/>
</dbReference>
<dbReference type="PANTHER" id="PTHR19271">
    <property type="entry name" value="CYTOCHROME B"/>
    <property type="match status" value="1"/>
</dbReference>
<dbReference type="PANTHER" id="PTHR19271:SF16">
    <property type="entry name" value="CYTOCHROME B"/>
    <property type="match status" value="1"/>
</dbReference>
<dbReference type="Pfam" id="PF00032">
    <property type="entry name" value="Cytochrom_B_C"/>
    <property type="match status" value="1"/>
</dbReference>
<dbReference type="Pfam" id="PF00033">
    <property type="entry name" value="Cytochrome_B"/>
    <property type="match status" value="1"/>
</dbReference>
<dbReference type="PIRSF" id="PIRSF038885">
    <property type="entry name" value="COB"/>
    <property type="match status" value="1"/>
</dbReference>
<dbReference type="SUPFAM" id="SSF81648">
    <property type="entry name" value="a domain/subunit of cytochrome bc1 complex (Ubiquinol-cytochrome c reductase)"/>
    <property type="match status" value="1"/>
</dbReference>
<dbReference type="SUPFAM" id="SSF81342">
    <property type="entry name" value="Transmembrane di-heme cytochromes"/>
    <property type="match status" value="1"/>
</dbReference>
<dbReference type="PROSITE" id="PS51003">
    <property type="entry name" value="CYTB_CTER"/>
    <property type="match status" value="1"/>
</dbReference>
<dbReference type="PROSITE" id="PS51002">
    <property type="entry name" value="CYTB_NTER"/>
    <property type="match status" value="1"/>
</dbReference>
<name>CYB_ASIFL</name>
<feature type="chain" id="PRO_0000060644" description="Cytochrome b">
    <location>
        <begin position="1"/>
        <end position="380"/>
    </location>
</feature>
<feature type="transmembrane region" description="Helical" evidence="2">
    <location>
        <begin position="34"/>
        <end position="54"/>
    </location>
</feature>
<feature type="transmembrane region" description="Helical" evidence="2">
    <location>
        <begin position="78"/>
        <end position="99"/>
    </location>
</feature>
<feature type="transmembrane region" description="Helical" evidence="2">
    <location>
        <begin position="114"/>
        <end position="134"/>
    </location>
</feature>
<feature type="transmembrane region" description="Helical" evidence="2">
    <location>
        <begin position="179"/>
        <end position="199"/>
    </location>
</feature>
<feature type="transmembrane region" description="Helical" evidence="2">
    <location>
        <begin position="227"/>
        <end position="247"/>
    </location>
</feature>
<feature type="transmembrane region" description="Helical" evidence="2">
    <location>
        <begin position="289"/>
        <end position="309"/>
    </location>
</feature>
<feature type="transmembrane region" description="Helical" evidence="2">
    <location>
        <begin position="321"/>
        <end position="341"/>
    </location>
</feature>
<feature type="transmembrane region" description="Helical" evidence="2">
    <location>
        <begin position="348"/>
        <end position="368"/>
    </location>
</feature>
<feature type="binding site" description="axial binding residue" evidence="2">
    <location>
        <position position="84"/>
    </location>
    <ligand>
        <name>heme b</name>
        <dbReference type="ChEBI" id="CHEBI:60344"/>
        <label>b562</label>
    </ligand>
    <ligandPart>
        <name>Fe</name>
        <dbReference type="ChEBI" id="CHEBI:18248"/>
    </ligandPart>
</feature>
<feature type="binding site" description="axial binding residue" evidence="2">
    <location>
        <position position="98"/>
    </location>
    <ligand>
        <name>heme b</name>
        <dbReference type="ChEBI" id="CHEBI:60344"/>
        <label>b566</label>
    </ligand>
    <ligandPart>
        <name>Fe</name>
        <dbReference type="ChEBI" id="CHEBI:18248"/>
    </ligandPart>
</feature>
<feature type="binding site" description="axial binding residue" evidence="2">
    <location>
        <position position="183"/>
    </location>
    <ligand>
        <name>heme b</name>
        <dbReference type="ChEBI" id="CHEBI:60344"/>
        <label>b562</label>
    </ligand>
    <ligandPart>
        <name>Fe</name>
        <dbReference type="ChEBI" id="CHEBI:18248"/>
    </ligandPart>
</feature>
<feature type="binding site" description="axial binding residue" evidence="2">
    <location>
        <position position="197"/>
    </location>
    <ligand>
        <name>heme b</name>
        <dbReference type="ChEBI" id="CHEBI:60344"/>
        <label>b566</label>
    </ligand>
    <ligandPart>
        <name>Fe</name>
        <dbReference type="ChEBI" id="CHEBI:18248"/>
    </ligandPart>
</feature>
<feature type="binding site" evidence="2">
    <location>
        <position position="202"/>
    </location>
    <ligand>
        <name>a ubiquinone</name>
        <dbReference type="ChEBI" id="CHEBI:16389"/>
    </ligand>
</feature>
<feature type="sequence conflict" description="In Ref. 2; AAF24628." evidence="5" ref="2">
    <original>T</original>
    <variation>L</variation>
    <location>
        <position position="123"/>
    </location>
</feature>
<feature type="sequence conflict" description="In Ref. 2; AAF24628." evidence="5" ref="2">
    <original>A</original>
    <variation>T</variation>
    <location>
        <position position="128"/>
    </location>
</feature>
<organism>
    <name type="scientific">Asio flammeus</name>
    <name type="common">Short-eared owl</name>
    <name type="synonym">Strix flammea</name>
    <dbReference type="NCBI Taxonomy" id="56267"/>
    <lineage>
        <taxon>Eukaryota</taxon>
        <taxon>Metazoa</taxon>
        <taxon>Chordata</taxon>
        <taxon>Craniata</taxon>
        <taxon>Vertebrata</taxon>
        <taxon>Euteleostomi</taxon>
        <taxon>Archelosauria</taxon>
        <taxon>Archosauria</taxon>
        <taxon>Dinosauria</taxon>
        <taxon>Saurischia</taxon>
        <taxon>Theropoda</taxon>
        <taxon>Coelurosauria</taxon>
        <taxon>Aves</taxon>
        <taxon>Neognathae</taxon>
        <taxon>Neoaves</taxon>
        <taxon>Telluraves</taxon>
        <taxon>Strigiformes</taxon>
        <taxon>Strigidae</taxon>
        <taxon>Asio</taxon>
    </lineage>
</organism>
<comment type="function">
    <text evidence="2">Component of the ubiquinol-cytochrome c reductase complex (complex III or cytochrome b-c1 complex) that is part of the mitochondrial respiratory chain. The b-c1 complex mediates electron transfer from ubiquinol to cytochrome c. Contributes to the generation of a proton gradient across the mitochondrial membrane that is then used for ATP synthesis.</text>
</comment>
<comment type="cofactor">
    <cofactor evidence="2">
        <name>heme b</name>
        <dbReference type="ChEBI" id="CHEBI:60344"/>
    </cofactor>
    <text evidence="2">Binds 2 heme b groups non-covalently.</text>
</comment>
<comment type="subunit">
    <text evidence="2">The cytochrome bc1 complex contains 11 subunits: 3 respiratory subunits (MT-CYB, CYC1 and UQCRFS1), 2 core proteins (UQCRC1 and UQCRC2) and 6 low-molecular weight proteins (UQCRH/QCR6, UQCRB/QCR7, UQCRQ/QCR8, UQCR10/QCR9, UQCR11/QCR10 and a cleavage product of UQCRFS1). This cytochrome bc1 complex then forms a dimer.</text>
</comment>
<comment type="subcellular location">
    <subcellularLocation>
        <location evidence="2">Mitochondrion inner membrane</location>
        <topology evidence="2">Multi-pass membrane protein</topology>
    </subcellularLocation>
</comment>
<comment type="miscellaneous">
    <text evidence="1">Heme 1 (or BL or b562) is low-potential and absorbs at about 562 nm, and heme 2 (or BH or b566) is high-potential and absorbs at about 566 nm.</text>
</comment>
<comment type="similarity">
    <text evidence="3 4">Belongs to the cytochrome b family.</text>
</comment>
<comment type="caution">
    <text evidence="2">The full-length protein contains only eight transmembrane helices, not nine as predicted by bioinformatics tools.</text>
</comment>